<dbReference type="EC" id="2.1.1.163" evidence="1"/>
<dbReference type="EMBL" id="CP000001">
    <property type="protein sequence ID" value="AAU18854.1"/>
    <property type="molecule type" value="Genomic_DNA"/>
</dbReference>
<dbReference type="RefSeq" id="WP_001187667.1">
    <property type="nucleotide sequence ID" value="NZ_CP009968.1"/>
</dbReference>
<dbReference type="SMR" id="Q63DL9"/>
<dbReference type="GeneID" id="75084824"/>
<dbReference type="KEGG" id="bcz:BCE33L1395"/>
<dbReference type="PATRIC" id="fig|288681.22.peg.4157"/>
<dbReference type="UniPathway" id="UPA00079">
    <property type="reaction ID" value="UER00169"/>
</dbReference>
<dbReference type="Proteomes" id="UP000002612">
    <property type="component" value="Chromosome"/>
</dbReference>
<dbReference type="GO" id="GO:0043770">
    <property type="term" value="F:demethylmenaquinone methyltransferase activity"/>
    <property type="evidence" value="ECO:0007669"/>
    <property type="project" value="UniProtKB-UniRule"/>
</dbReference>
<dbReference type="GO" id="GO:0009234">
    <property type="term" value="P:menaquinone biosynthetic process"/>
    <property type="evidence" value="ECO:0007669"/>
    <property type="project" value="UniProtKB-UniRule"/>
</dbReference>
<dbReference type="GO" id="GO:0032259">
    <property type="term" value="P:methylation"/>
    <property type="evidence" value="ECO:0007669"/>
    <property type="project" value="UniProtKB-KW"/>
</dbReference>
<dbReference type="CDD" id="cd02440">
    <property type="entry name" value="AdoMet_MTases"/>
    <property type="match status" value="1"/>
</dbReference>
<dbReference type="FunFam" id="3.40.50.150:FF:000086">
    <property type="entry name" value="Demethylmenaquinone methyltransferase"/>
    <property type="match status" value="1"/>
</dbReference>
<dbReference type="Gene3D" id="3.40.50.150">
    <property type="entry name" value="Vaccinia Virus protein VP39"/>
    <property type="match status" value="1"/>
</dbReference>
<dbReference type="HAMAP" id="MF_01813">
    <property type="entry name" value="MenG_UbiE_methyltr"/>
    <property type="match status" value="1"/>
</dbReference>
<dbReference type="InterPro" id="IPR014122">
    <property type="entry name" value="MenG_heptapren"/>
</dbReference>
<dbReference type="InterPro" id="IPR029063">
    <property type="entry name" value="SAM-dependent_MTases_sf"/>
</dbReference>
<dbReference type="InterPro" id="IPR004033">
    <property type="entry name" value="UbiE/COQ5_MeTrFase"/>
</dbReference>
<dbReference type="InterPro" id="IPR023576">
    <property type="entry name" value="UbiE/COQ5_MeTrFase_CS"/>
</dbReference>
<dbReference type="NCBIfam" id="TIGR02752">
    <property type="entry name" value="MenG_heptapren"/>
    <property type="match status" value="1"/>
</dbReference>
<dbReference type="NCBIfam" id="TIGR01934">
    <property type="entry name" value="MenG_MenH_UbiE"/>
    <property type="match status" value="1"/>
</dbReference>
<dbReference type="NCBIfam" id="NF001243">
    <property type="entry name" value="PRK00216.1-4"/>
    <property type="match status" value="1"/>
</dbReference>
<dbReference type="NCBIfam" id="NF001244">
    <property type="entry name" value="PRK00216.1-5"/>
    <property type="match status" value="1"/>
</dbReference>
<dbReference type="PANTHER" id="PTHR43591:SF24">
    <property type="entry name" value="2-METHOXY-6-POLYPRENYL-1,4-BENZOQUINOL METHYLASE, MITOCHONDRIAL"/>
    <property type="match status" value="1"/>
</dbReference>
<dbReference type="PANTHER" id="PTHR43591">
    <property type="entry name" value="METHYLTRANSFERASE"/>
    <property type="match status" value="1"/>
</dbReference>
<dbReference type="Pfam" id="PF01209">
    <property type="entry name" value="Ubie_methyltran"/>
    <property type="match status" value="1"/>
</dbReference>
<dbReference type="SUPFAM" id="SSF53335">
    <property type="entry name" value="S-adenosyl-L-methionine-dependent methyltransferases"/>
    <property type="match status" value="1"/>
</dbReference>
<dbReference type="PROSITE" id="PS51608">
    <property type="entry name" value="SAM_MT_UBIE"/>
    <property type="match status" value="1"/>
</dbReference>
<dbReference type="PROSITE" id="PS01183">
    <property type="entry name" value="UBIE_1"/>
    <property type="match status" value="1"/>
</dbReference>
<dbReference type="PROSITE" id="PS01184">
    <property type="entry name" value="UBIE_2"/>
    <property type="match status" value="1"/>
</dbReference>
<evidence type="ECO:0000255" key="1">
    <source>
        <dbReference type="HAMAP-Rule" id="MF_01813"/>
    </source>
</evidence>
<comment type="function">
    <text evidence="1">Methyltransferase required for the conversion of demethylmenaquinol (DMKH2) to menaquinol (MKH2).</text>
</comment>
<comment type="catalytic activity">
    <reaction evidence="1">
        <text>a 2-demethylmenaquinol + S-adenosyl-L-methionine = a menaquinol + S-adenosyl-L-homocysteine + H(+)</text>
        <dbReference type="Rhea" id="RHEA:42640"/>
        <dbReference type="Rhea" id="RHEA-COMP:9539"/>
        <dbReference type="Rhea" id="RHEA-COMP:9563"/>
        <dbReference type="ChEBI" id="CHEBI:15378"/>
        <dbReference type="ChEBI" id="CHEBI:18151"/>
        <dbReference type="ChEBI" id="CHEBI:55437"/>
        <dbReference type="ChEBI" id="CHEBI:57856"/>
        <dbReference type="ChEBI" id="CHEBI:59789"/>
        <dbReference type="EC" id="2.1.1.163"/>
    </reaction>
</comment>
<comment type="pathway">
    <text evidence="1">Quinol/quinone metabolism; menaquinone biosynthesis; menaquinol from 1,4-dihydroxy-2-naphthoate: step 2/2.</text>
</comment>
<comment type="similarity">
    <text evidence="1">Belongs to the class I-like SAM-binding methyltransferase superfamily. MenG/UbiE family.</text>
</comment>
<protein>
    <recommendedName>
        <fullName evidence="1">Demethylmenaquinone methyltransferase</fullName>
        <ecNumber evidence="1">2.1.1.163</ecNumber>
    </recommendedName>
</protein>
<name>MENG_BACCZ</name>
<proteinExistence type="inferred from homology"/>
<reference key="1">
    <citation type="journal article" date="2006" name="J. Bacteriol.">
        <title>Pathogenomic sequence analysis of Bacillus cereus and Bacillus thuringiensis isolates closely related to Bacillus anthracis.</title>
        <authorList>
            <person name="Han C.S."/>
            <person name="Xie G."/>
            <person name="Challacombe J.F."/>
            <person name="Altherr M.R."/>
            <person name="Bhotika S.S."/>
            <person name="Bruce D."/>
            <person name="Campbell C.S."/>
            <person name="Campbell M.L."/>
            <person name="Chen J."/>
            <person name="Chertkov O."/>
            <person name="Cleland C."/>
            <person name="Dimitrijevic M."/>
            <person name="Doggett N.A."/>
            <person name="Fawcett J.J."/>
            <person name="Glavina T."/>
            <person name="Goodwin L.A."/>
            <person name="Hill K.K."/>
            <person name="Hitchcock P."/>
            <person name="Jackson P.J."/>
            <person name="Keim P."/>
            <person name="Kewalramani A.R."/>
            <person name="Longmire J."/>
            <person name="Lucas S."/>
            <person name="Malfatti S."/>
            <person name="McMurry K."/>
            <person name="Meincke L.J."/>
            <person name="Misra M."/>
            <person name="Moseman B.L."/>
            <person name="Mundt M."/>
            <person name="Munk A.C."/>
            <person name="Okinaka R.T."/>
            <person name="Parson-Quintana B."/>
            <person name="Reilly L.P."/>
            <person name="Richardson P."/>
            <person name="Robinson D.L."/>
            <person name="Rubin E."/>
            <person name="Saunders E."/>
            <person name="Tapia R."/>
            <person name="Tesmer J.G."/>
            <person name="Thayer N."/>
            <person name="Thompson L.S."/>
            <person name="Tice H."/>
            <person name="Ticknor L.O."/>
            <person name="Wills P.L."/>
            <person name="Brettin T.S."/>
            <person name="Gilna P."/>
        </authorList>
    </citation>
    <scope>NUCLEOTIDE SEQUENCE [LARGE SCALE GENOMIC DNA]</scope>
    <source>
        <strain>ZK / E33L</strain>
    </source>
</reference>
<keyword id="KW-0474">Menaquinone biosynthesis</keyword>
<keyword id="KW-0489">Methyltransferase</keyword>
<keyword id="KW-0949">S-adenosyl-L-methionine</keyword>
<keyword id="KW-0808">Transferase</keyword>
<accession>Q63DL9</accession>
<sequence length="237" mass="26887">MQQSKEERVHDVFEKISDKYDVMNSVISFQRHKAWRKETMRIMDVKPGSKALDVCCGTADWTIALAGAVGEQGKVVGLDFSENMLSVGKQKVEALQLKQVELLHGNAMELPFEDNTFDYVTIGFGLRNVPDYMHVLKEMTRVVKPGGKVICLETSQPTMIGFRQGYILYFKYIMPLFGKLFAKSYKEYSWLQESASTFPGMKELANMFEKAGLERVQVKPFTFGVAAMHLGMKPESK</sequence>
<gene>
    <name evidence="1" type="primary">menG</name>
    <name type="ordered locus">BCE33L1395</name>
</gene>
<feature type="chain" id="PRO_0000193240" description="Demethylmenaquinone methyltransferase">
    <location>
        <begin position="1"/>
        <end position="237"/>
    </location>
</feature>
<feature type="binding site" evidence="1">
    <location>
        <position position="58"/>
    </location>
    <ligand>
        <name>S-adenosyl-L-methionine</name>
        <dbReference type="ChEBI" id="CHEBI:59789"/>
    </ligand>
</feature>
<feature type="binding site" evidence="1">
    <location>
        <position position="79"/>
    </location>
    <ligand>
        <name>S-adenosyl-L-methionine</name>
        <dbReference type="ChEBI" id="CHEBI:59789"/>
    </ligand>
</feature>
<feature type="binding site" evidence="1">
    <location>
        <begin position="106"/>
        <end position="107"/>
    </location>
    <ligand>
        <name>S-adenosyl-L-methionine</name>
        <dbReference type="ChEBI" id="CHEBI:59789"/>
    </ligand>
</feature>
<organism>
    <name type="scientific">Bacillus cereus (strain ZK / E33L)</name>
    <dbReference type="NCBI Taxonomy" id="288681"/>
    <lineage>
        <taxon>Bacteria</taxon>
        <taxon>Bacillati</taxon>
        <taxon>Bacillota</taxon>
        <taxon>Bacilli</taxon>
        <taxon>Bacillales</taxon>
        <taxon>Bacillaceae</taxon>
        <taxon>Bacillus</taxon>
        <taxon>Bacillus cereus group</taxon>
    </lineage>
</organism>